<accession>A2SFB4</accession>
<evidence type="ECO:0000255" key="1">
    <source>
        <dbReference type="HAMAP-Rule" id="MF_00303"/>
    </source>
</evidence>
<proteinExistence type="inferred from homology"/>
<gene>
    <name evidence="1" type="primary">tig</name>
    <name type="ordered locus">Mpe_A1291</name>
</gene>
<dbReference type="EC" id="5.2.1.8" evidence="1"/>
<dbReference type="EMBL" id="CP000555">
    <property type="protein sequence ID" value="ABM94253.1"/>
    <property type="molecule type" value="Genomic_DNA"/>
</dbReference>
<dbReference type="RefSeq" id="WP_011828890.1">
    <property type="nucleotide sequence ID" value="NC_008825.1"/>
</dbReference>
<dbReference type="SMR" id="A2SFB4"/>
<dbReference type="STRING" id="420662.Mpe_A1291"/>
<dbReference type="KEGG" id="mpt:Mpe_A1291"/>
<dbReference type="eggNOG" id="COG0544">
    <property type="taxonomic scope" value="Bacteria"/>
</dbReference>
<dbReference type="HOGENOM" id="CLU_033058_2_0_4"/>
<dbReference type="Proteomes" id="UP000000366">
    <property type="component" value="Chromosome"/>
</dbReference>
<dbReference type="GO" id="GO:0005737">
    <property type="term" value="C:cytoplasm"/>
    <property type="evidence" value="ECO:0007669"/>
    <property type="project" value="UniProtKB-SubCell"/>
</dbReference>
<dbReference type="GO" id="GO:0003755">
    <property type="term" value="F:peptidyl-prolyl cis-trans isomerase activity"/>
    <property type="evidence" value="ECO:0007669"/>
    <property type="project" value="UniProtKB-UniRule"/>
</dbReference>
<dbReference type="GO" id="GO:0044183">
    <property type="term" value="F:protein folding chaperone"/>
    <property type="evidence" value="ECO:0007669"/>
    <property type="project" value="TreeGrafter"/>
</dbReference>
<dbReference type="GO" id="GO:0043022">
    <property type="term" value="F:ribosome binding"/>
    <property type="evidence" value="ECO:0007669"/>
    <property type="project" value="TreeGrafter"/>
</dbReference>
<dbReference type="GO" id="GO:0051083">
    <property type="term" value="P:'de novo' cotranslational protein folding"/>
    <property type="evidence" value="ECO:0007669"/>
    <property type="project" value="TreeGrafter"/>
</dbReference>
<dbReference type="GO" id="GO:0051301">
    <property type="term" value="P:cell division"/>
    <property type="evidence" value="ECO:0007669"/>
    <property type="project" value="UniProtKB-KW"/>
</dbReference>
<dbReference type="GO" id="GO:0061077">
    <property type="term" value="P:chaperone-mediated protein folding"/>
    <property type="evidence" value="ECO:0007669"/>
    <property type="project" value="TreeGrafter"/>
</dbReference>
<dbReference type="GO" id="GO:0015031">
    <property type="term" value="P:protein transport"/>
    <property type="evidence" value="ECO:0007669"/>
    <property type="project" value="UniProtKB-UniRule"/>
</dbReference>
<dbReference type="GO" id="GO:0043335">
    <property type="term" value="P:protein unfolding"/>
    <property type="evidence" value="ECO:0007669"/>
    <property type="project" value="TreeGrafter"/>
</dbReference>
<dbReference type="FunFam" id="3.10.50.40:FF:000001">
    <property type="entry name" value="Trigger factor"/>
    <property type="match status" value="1"/>
</dbReference>
<dbReference type="Gene3D" id="3.10.50.40">
    <property type="match status" value="1"/>
</dbReference>
<dbReference type="Gene3D" id="3.30.70.1050">
    <property type="entry name" value="Trigger factor ribosome-binding domain"/>
    <property type="match status" value="1"/>
</dbReference>
<dbReference type="Gene3D" id="1.10.3120.10">
    <property type="entry name" value="Trigger factor, C-terminal domain"/>
    <property type="match status" value="1"/>
</dbReference>
<dbReference type="HAMAP" id="MF_00303">
    <property type="entry name" value="Trigger_factor_Tig"/>
    <property type="match status" value="1"/>
</dbReference>
<dbReference type="InterPro" id="IPR046357">
    <property type="entry name" value="PPIase_dom_sf"/>
</dbReference>
<dbReference type="InterPro" id="IPR001179">
    <property type="entry name" value="PPIase_FKBP_dom"/>
</dbReference>
<dbReference type="InterPro" id="IPR005215">
    <property type="entry name" value="Trig_fac"/>
</dbReference>
<dbReference type="InterPro" id="IPR008880">
    <property type="entry name" value="Trigger_fac_C"/>
</dbReference>
<dbReference type="InterPro" id="IPR037041">
    <property type="entry name" value="Trigger_fac_C_sf"/>
</dbReference>
<dbReference type="InterPro" id="IPR008881">
    <property type="entry name" value="Trigger_fac_ribosome-bd_bac"/>
</dbReference>
<dbReference type="InterPro" id="IPR036611">
    <property type="entry name" value="Trigger_fac_ribosome-bd_sf"/>
</dbReference>
<dbReference type="InterPro" id="IPR027304">
    <property type="entry name" value="Trigger_fact/SurA_dom_sf"/>
</dbReference>
<dbReference type="NCBIfam" id="TIGR00115">
    <property type="entry name" value="tig"/>
    <property type="match status" value="1"/>
</dbReference>
<dbReference type="PANTHER" id="PTHR30560">
    <property type="entry name" value="TRIGGER FACTOR CHAPERONE AND PEPTIDYL-PROLYL CIS/TRANS ISOMERASE"/>
    <property type="match status" value="1"/>
</dbReference>
<dbReference type="PANTHER" id="PTHR30560:SF3">
    <property type="entry name" value="TRIGGER FACTOR-LIKE PROTEIN TIG, CHLOROPLASTIC"/>
    <property type="match status" value="1"/>
</dbReference>
<dbReference type="Pfam" id="PF00254">
    <property type="entry name" value="FKBP_C"/>
    <property type="match status" value="1"/>
</dbReference>
<dbReference type="Pfam" id="PF05698">
    <property type="entry name" value="Trigger_C"/>
    <property type="match status" value="1"/>
</dbReference>
<dbReference type="Pfam" id="PF05697">
    <property type="entry name" value="Trigger_N"/>
    <property type="match status" value="1"/>
</dbReference>
<dbReference type="PIRSF" id="PIRSF003095">
    <property type="entry name" value="Trigger_factor"/>
    <property type="match status" value="1"/>
</dbReference>
<dbReference type="SUPFAM" id="SSF54534">
    <property type="entry name" value="FKBP-like"/>
    <property type="match status" value="1"/>
</dbReference>
<dbReference type="SUPFAM" id="SSF109998">
    <property type="entry name" value="Triger factor/SurA peptide-binding domain-like"/>
    <property type="match status" value="1"/>
</dbReference>
<dbReference type="SUPFAM" id="SSF102735">
    <property type="entry name" value="Trigger factor ribosome-binding domain"/>
    <property type="match status" value="1"/>
</dbReference>
<dbReference type="PROSITE" id="PS50059">
    <property type="entry name" value="FKBP_PPIASE"/>
    <property type="match status" value="1"/>
</dbReference>
<keyword id="KW-0131">Cell cycle</keyword>
<keyword id="KW-0132">Cell division</keyword>
<keyword id="KW-0143">Chaperone</keyword>
<keyword id="KW-0963">Cytoplasm</keyword>
<keyword id="KW-0413">Isomerase</keyword>
<keyword id="KW-1185">Reference proteome</keyword>
<keyword id="KW-0697">Rotamase</keyword>
<reference key="1">
    <citation type="journal article" date="2007" name="J. Bacteriol.">
        <title>Whole-genome analysis of the methyl tert-butyl ether-degrading beta-proteobacterium Methylibium petroleiphilum PM1.</title>
        <authorList>
            <person name="Kane S.R."/>
            <person name="Chakicherla A.Y."/>
            <person name="Chain P.S.G."/>
            <person name="Schmidt R."/>
            <person name="Shin M.W."/>
            <person name="Legler T.C."/>
            <person name="Scow K.M."/>
            <person name="Larimer F.W."/>
            <person name="Lucas S.M."/>
            <person name="Richardson P.M."/>
            <person name="Hristova K.R."/>
        </authorList>
    </citation>
    <scope>NUCLEOTIDE SEQUENCE [LARGE SCALE GENOMIC DNA]</scope>
    <source>
        <strain>ATCC BAA-1232 / LMG 22953 / PM1</strain>
    </source>
</reference>
<organism>
    <name type="scientific">Methylibium petroleiphilum (strain ATCC BAA-1232 / LMG 22953 / PM1)</name>
    <dbReference type="NCBI Taxonomy" id="420662"/>
    <lineage>
        <taxon>Bacteria</taxon>
        <taxon>Pseudomonadati</taxon>
        <taxon>Pseudomonadota</taxon>
        <taxon>Betaproteobacteria</taxon>
        <taxon>Burkholderiales</taxon>
        <taxon>Sphaerotilaceae</taxon>
        <taxon>Methylibium</taxon>
    </lineage>
</organism>
<name>TIG_METPP</name>
<feature type="chain" id="PRO_1000022708" description="Trigger factor">
    <location>
        <begin position="1"/>
        <end position="434"/>
    </location>
</feature>
<feature type="domain" description="PPIase FKBP-type" evidence="1">
    <location>
        <begin position="163"/>
        <end position="248"/>
    </location>
</feature>
<sequence>MAVTVETLEKLERRITLILSADTIKNEVEMRLKRLAKTVKADGFRPGKVPMSVVAQRYGYSVQYEVMNDKVGEAFSKAANEAQLRVAGAPRISEKEGAPEGELAFDATFEVYPDVKIGDLSATEIDRVSTEVTDAAIDKTLDILRKQRRTFAQRAASEGAVDGDRVTIDFEGKIDGVPFDGGKAEGFQFILGEGRMLEAFEKAVRGMKTGESKTFPLQFPDDYQGKEVAGKEADFLVTLTKIEAQHLPEVDEAFAQSLGIQDPTLEGLRADIRKNLEREVKNRLIARNKSAVMEALIKVADLDLPKALVQNETDRMIEGARADLKQRGIKDADKAPIPAEIFHEQAERRVRLGLVVAELVRTNQLQAKGEQIGAHIEEMALSYEKPEEVRRWYFGDRQRLAEVEALVVENNVTEFVLSKAKVSDKQLPFDELMV</sequence>
<protein>
    <recommendedName>
        <fullName evidence="1">Trigger factor</fullName>
        <shortName evidence="1">TF</shortName>
        <ecNumber evidence="1">5.2.1.8</ecNumber>
    </recommendedName>
    <alternativeName>
        <fullName evidence="1">PPIase</fullName>
    </alternativeName>
</protein>
<comment type="function">
    <text evidence="1">Involved in protein export. Acts as a chaperone by maintaining the newly synthesized protein in an open conformation. Functions as a peptidyl-prolyl cis-trans isomerase.</text>
</comment>
<comment type="catalytic activity">
    <reaction evidence="1">
        <text>[protein]-peptidylproline (omega=180) = [protein]-peptidylproline (omega=0)</text>
        <dbReference type="Rhea" id="RHEA:16237"/>
        <dbReference type="Rhea" id="RHEA-COMP:10747"/>
        <dbReference type="Rhea" id="RHEA-COMP:10748"/>
        <dbReference type="ChEBI" id="CHEBI:83833"/>
        <dbReference type="ChEBI" id="CHEBI:83834"/>
        <dbReference type="EC" id="5.2.1.8"/>
    </reaction>
</comment>
<comment type="subcellular location">
    <subcellularLocation>
        <location>Cytoplasm</location>
    </subcellularLocation>
    <text evidence="1">About half TF is bound to the ribosome near the polypeptide exit tunnel while the other half is free in the cytoplasm.</text>
</comment>
<comment type="domain">
    <text evidence="1">Consists of 3 domains; the N-terminus binds the ribosome, the middle domain has PPIase activity, while the C-terminus has intrinsic chaperone activity on its own.</text>
</comment>
<comment type="similarity">
    <text evidence="1">Belongs to the FKBP-type PPIase family. Tig subfamily.</text>
</comment>